<reference key="1">
    <citation type="journal article" date="2009" name="Infect. Immun.">
        <title>Comparative genomics reveal extensive transposon-mediated genomic plasticity and diversity among potential effector proteins within the genus Coxiella.</title>
        <authorList>
            <person name="Beare P.A."/>
            <person name="Unsworth N."/>
            <person name="Andoh M."/>
            <person name="Voth D.E."/>
            <person name="Omsland A."/>
            <person name="Gilk S.D."/>
            <person name="Williams K.P."/>
            <person name="Sobral B.W."/>
            <person name="Kupko J.J. III"/>
            <person name="Porcella S.F."/>
            <person name="Samuel J.E."/>
            <person name="Heinzen R.A."/>
        </authorList>
    </citation>
    <scope>NUCLEOTIDE SEQUENCE [LARGE SCALE GENOMIC DNA]</scope>
    <source>
        <strain>Dugway 5J108-111</strain>
    </source>
</reference>
<proteinExistence type="inferred from homology"/>
<dbReference type="EMBL" id="CP000733">
    <property type="protein sequence ID" value="ABS78022.2"/>
    <property type="status" value="ALT_INIT"/>
    <property type="molecule type" value="Genomic_DNA"/>
</dbReference>
<dbReference type="SMR" id="A9KD22"/>
<dbReference type="KEGG" id="cbd:CBUD_1845"/>
<dbReference type="HOGENOM" id="CLU_073626_1_1_6"/>
<dbReference type="Proteomes" id="UP000008555">
    <property type="component" value="Chromosome"/>
</dbReference>
<dbReference type="GO" id="GO:0022627">
    <property type="term" value="C:cytosolic small ribosomal subunit"/>
    <property type="evidence" value="ECO:0007669"/>
    <property type="project" value="TreeGrafter"/>
</dbReference>
<dbReference type="GO" id="GO:0019843">
    <property type="term" value="F:rRNA binding"/>
    <property type="evidence" value="ECO:0007669"/>
    <property type="project" value="UniProtKB-UniRule"/>
</dbReference>
<dbReference type="GO" id="GO:0003735">
    <property type="term" value="F:structural constituent of ribosome"/>
    <property type="evidence" value="ECO:0007669"/>
    <property type="project" value="InterPro"/>
</dbReference>
<dbReference type="GO" id="GO:0006412">
    <property type="term" value="P:translation"/>
    <property type="evidence" value="ECO:0007669"/>
    <property type="project" value="UniProtKB-UniRule"/>
</dbReference>
<dbReference type="CDD" id="cd00364">
    <property type="entry name" value="Ribosomal_uS17"/>
    <property type="match status" value="1"/>
</dbReference>
<dbReference type="FunFam" id="2.40.50.140:FF:000014">
    <property type="entry name" value="30S ribosomal protein S17"/>
    <property type="match status" value="1"/>
</dbReference>
<dbReference type="Gene3D" id="2.40.50.140">
    <property type="entry name" value="Nucleic acid-binding proteins"/>
    <property type="match status" value="1"/>
</dbReference>
<dbReference type="HAMAP" id="MF_01345_B">
    <property type="entry name" value="Ribosomal_uS17_B"/>
    <property type="match status" value="1"/>
</dbReference>
<dbReference type="InterPro" id="IPR012340">
    <property type="entry name" value="NA-bd_OB-fold"/>
</dbReference>
<dbReference type="InterPro" id="IPR000266">
    <property type="entry name" value="Ribosomal_uS17"/>
</dbReference>
<dbReference type="InterPro" id="IPR019984">
    <property type="entry name" value="Ribosomal_uS17_bact/chlr"/>
</dbReference>
<dbReference type="InterPro" id="IPR019979">
    <property type="entry name" value="Ribosomal_uS17_CS"/>
</dbReference>
<dbReference type="NCBIfam" id="NF004123">
    <property type="entry name" value="PRK05610.1"/>
    <property type="match status" value="1"/>
</dbReference>
<dbReference type="NCBIfam" id="TIGR03635">
    <property type="entry name" value="uS17_bact"/>
    <property type="match status" value="1"/>
</dbReference>
<dbReference type="PANTHER" id="PTHR10744">
    <property type="entry name" value="40S RIBOSOMAL PROTEIN S11 FAMILY MEMBER"/>
    <property type="match status" value="1"/>
</dbReference>
<dbReference type="PANTHER" id="PTHR10744:SF1">
    <property type="entry name" value="SMALL RIBOSOMAL SUBUNIT PROTEIN US17M"/>
    <property type="match status" value="1"/>
</dbReference>
<dbReference type="Pfam" id="PF00366">
    <property type="entry name" value="Ribosomal_S17"/>
    <property type="match status" value="1"/>
</dbReference>
<dbReference type="PRINTS" id="PR00973">
    <property type="entry name" value="RIBOSOMALS17"/>
</dbReference>
<dbReference type="SUPFAM" id="SSF50249">
    <property type="entry name" value="Nucleic acid-binding proteins"/>
    <property type="match status" value="1"/>
</dbReference>
<dbReference type="PROSITE" id="PS00056">
    <property type="entry name" value="RIBOSOMAL_S17"/>
    <property type="match status" value="1"/>
</dbReference>
<evidence type="ECO:0000255" key="1">
    <source>
        <dbReference type="HAMAP-Rule" id="MF_01345"/>
    </source>
</evidence>
<evidence type="ECO:0000305" key="2"/>
<accession>A9KD22</accession>
<gene>
    <name evidence="1" type="primary">rpsQ</name>
    <name type="ordered locus">CBUD_1845</name>
</gene>
<keyword id="KW-0687">Ribonucleoprotein</keyword>
<keyword id="KW-0689">Ribosomal protein</keyword>
<keyword id="KW-0694">RNA-binding</keyword>
<keyword id="KW-0699">rRNA-binding</keyword>
<protein>
    <recommendedName>
        <fullName evidence="1">Small ribosomal subunit protein uS17</fullName>
    </recommendedName>
    <alternativeName>
        <fullName evidence="2">30S ribosomal protein S17</fullName>
    </alternativeName>
</protein>
<sequence length="89" mass="10278">MNKNEKMVRSLMGTVVSNKMNDTVVVRVERRVKHPKYGKFIKRSTKIHAHDKGNGCQIGDIVTIRECRPISKTKSWTLVKINERAEKVE</sequence>
<name>RS17_COXBN</name>
<organism>
    <name type="scientific">Coxiella burnetii (strain Dugway 5J108-111)</name>
    <dbReference type="NCBI Taxonomy" id="434922"/>
    <lineage>
        <taxon>Bacteria</taxon>
        <taxon>Pseudomonadati</taxon>
        <taxon>Pseudomonadota</taxon>
        <taxon>Gammaproteobacteria</taxon>
        <taxon>Legionellales</taxon>
        <taxon>Coxiellaceae</taxon>
        <taxon>Coxiella</taxon>
    </lineage>
</organism>
<comment type="function">
    <text evidence="1">One of the primary rRNA binding proteins, it binds specifically to the 5'-end of 16S ribosomal RNA.</text>
</comment>
<comment type="subunit">
    <text evidence="1">Part of the 30S ribosomal subunit.</text>
</comment>
<comment type="similarity">
    <text evidence="1">Belongs to the universal ribosomal protein uS17 family.</text>
</comment>
<comment type="sequence caution" evidence="2">
    <conflict type="erroneous initiation">
        <sequence resource="EMBL-CDS" id="ABS78022"/>
    </conflict>
</comment>
<feature type="chain" id="PRO_1000086836" description="Small ribosomal subunit protein uS17">
    <location>
        <begin position="1"/>
        <end position="89"/>
    </location>
</feature>